<organism>
    <name type="scientific">Clostridium perfringens (strain ATCC 13124 / DSM 756 / JCM 1290 / NCIMB 6125 / NCTC 8237 / Type A)</name>
    <dbReference type="NCBI Taxonomy" id="195103"/>
    <lineage>
        <taxon>Bacteria</taxon>
        <taxon>Bacillati</taxon>
        <taxon>Bacillota</taxon>
        <taxon>Clostridia</taxon>
        <taxon>Eubacteriales</taxon>
        <taxon>Clostridiaceae</taxon>
        <taxon>Clostridium</taxon>
    </lineage>
</organism>
<name>SYH_CLOP1</name>
<evidence type="ECO:0000255" key="1">
    <source>
        <dbReference type="HAMAP-Rule" id="MF_00127"/>
    </source>
</evidence>
<gene>
    <name evidence="1" type="primary">hisS</name>
    <name type="ordered locus">CPF_2189</name>
</gene>
<comment type="catalytic activity">
    <reaction evidence="1">
        <text>tRNA(His) + L-histidine + ATP = L-histidyl-tRNA(His) + AMP + diphosphate + H(+)</text>
        <dbReference type="Rhea" id="RHEA:17313"/>
        <dbReference type="Rhea" id="RHEA-COMP:9665"/>
        <dbReference type="Rhea" id="RHEA-COMP:9689"/>
        <dbReference type="ChEBI" id="CHEBI:15378"/>
        <dbReference type="ChEBI" id="CHEBI:30616"/>
        <dbReference type="ChEBI" id="CHEBI:33019"/>
        <dbReference type="ChEBI" id="CHEBI:57595"/>
        <dbReference type="ChEBI" id="CHEBI:78442"/>
        <dbReference type="ChEBI" id="CHEBI:78527"/>
        <dbReference type="ChEBI" id="CHEBI:456215"/>
        <dbReference type="EC" id="6.1.1.21"/>
    </reaction>
</comment>
<comment type="subunit">
    <text evidence="1">Homodimer.</text>
</comment>
<comment type="subcellular location">
    <subcellularLocation>
        <location evidence="1">Cytoplasm</location>
    </subcellularLocation>
</comment>
<comment type="similarity">
    <text evidence="1">Belongs to the class-II aminoacyl-tRNA synthetase family.</text>
</comment>
<keyword id="KW-0030">Aminoacyl-tRNA synthetase</keyword>
<keyword id="KW-0067">ATP-binding</keyword>
<keyword id="KW-0963">Cytoplasm</keyword>
<keyword id="KW-0436">Ligase</keyword>
<keyword id="KW-0547">Nucleotide-binding</keyword>
<keyword id="KW-0648">Protein biosynthesis</keyword>
<accession>Q0TP27</accession>
<proteinExistence type="inferred from homology"/>
<feature type="chain" id="PRO_1000016347" description="Histidine--tRNA ligase">
    <location>
        <begin position="1"/>
        <end position="415"/>
    </location>
</feature>
<protein>
    <recommendedName>
        <fullName evidence="1">Histidine--tRNA ligase</fullName>
        <ecNumber evidence="1">6.1.1.21</ecNumber>
    </recommendedName>
    <alternativeName>
        <fullName evidence="1">Histidyl-tRNA synthetase</fullName>
        <shortName evidence="1">HisRS</shortName>
    </alternativeName>
</protein>
<sequence>MAIQAQKGTKDMLPNDAYKWHYIEEKLRKISAEYGIREIRTPMFEATELFKRGVGETTDVVQKEMYTFEDKGGRSITLKPEGTAPAVRAFIENSLYADAQPTKMFYFTPCFRYEKMQKGRLREFHQYGIEVFGSQEASIDAEILSLVMRALTEDFGIKGLSLNINSLGCPKCRAKFNEALKQYLKENYDNLCETCKTRFEKNPMRIIDCKEKRCKEIVKEAPSILDYICEECSDHFSKLKAYLDVMGIEYNIDPQIVRGLDYYSKTVFEVIKDGLTVCGGGRYDYLVEEVDGPKTPAMGFGLGLERLLLILDEEGIEIPEPVRCEVYIGSMGDNAKLEAMKLAFNLRKAGIKAEIDHLGKSVKAQMKYANKIGAKYTFVIGDSEIEENKIKIKRMSDGEQFEVSLDINEIVNIVK</sequence>
<reference key="1">
    <citation type="journal article" date="2006" name="Genome Res.">
        <title>Skewed genomic variability in strains of the toxigenic bacterial pathogen, Clostridium perfringens.</title>
        <authorList>
            <person name="Myers G.S.A."/>
            <person name="Rasko D.A."/>
            <person name="Cheung J.K."/>
            <person name="Ravel J."/>
            <person name="Seshadri R."/>
            <person name="DeBoy R.T."/>
            <person name="Ren Q."/>
            <person name="Varga J."/>
            <person name="Awad M.M."/>
            <person name="Brinkac L.M."/>
            <person name="Daugherty S.C."/>
            <person name="Haft D.H."/>
            <person name="Dodson R.J."/>
            <person name="Madupu R."/>
            <person name="Nelson W.C."/>
            <person name="Rosovitz M.J."/>
            <person name="Sullivan S.A."/>
            <person name="Khouri H."/>
            <person name="Dimitrov G.I."/>
            <person name="Watkins K.L."/>
            <person name="Mulligan S."/>
            <person name="Benton J."/>
            <person name="Radune D."/>
            <person name="Fisher D.J."/>
            <person name="Atkins H.S."/>
            <person name="Hiscox T."/>
            <person name="Jost B.H."/>
            <person name="Billington S.J."/>
            <person name="Songer J.G."/>
            <person name="McClane B.A."/>
            <person name="Titball R.W."/>
            <person name="Rood J.I."/>
            <person name="Melville S.B."/>
            <person name="Paulsen I.T."/>
        </authorList>
    </citation>
    <scope>NUCLEOTIDE SEQUENCE [LARGE SCALE GENOMIC DNA]</scope>
    <source>
        <strain>ATCC 13124 / DSM 756 / JCM 1290 / NCIMB 6125 / NCTC 8237 / S 107 / Type A</strain>
    </source>
</reference>
<dbReference type="EC" id="6.1.1.21" evidence="1"/>
<dbReference type="EMBL" id="CP000246">
    <property type="protein sequence ID" value="ABG82598.1"/>
    <property type="molecule type" value="Genomic_DNA"/>
</dbReference>
<dbReference type="RefSeq" id="WP_003478447.1">
    <property type="nucleotide sequence ID" value="NC_008261.1"/>
</dbReference>
<dbReference type="SMR" id="Q0TP27"/>
<dbReference type="STRING" id="195103.CPF_2189"/>
<dbReference type="PaxDb" id="195103-CPF_2189"/>
<dbReference type="KEGG" id="cpf:CPF_2189"/>
<dbReference type="eggNOG" id="COG0124">
    <property type="taxonomic scope" value="Bacteria"/>
</dbReference>
<dbReference type="HOGENOM" id="CLU_025113_1_1_9"/>
<dbReference type="Proteomes" id="UP000001823">
    <property type="component" value="Chromosome"/>
</dbReference>
<dbReference type="GO" id="GO:0005737">
    <property type="term" value="C:cytoplasm"/>
    <property type="evidence" value="ECO:0007669"/>
    <property type="project" value="UniProtKB-SubCell"/>
</dbReference>
<dbReference type="GO" id="GO:0005524">
    <property type="term" value="F:ATP binding"/>
    <property type="evidence" value="ECO:0007669"/>
    <property type="project" value="UniProtKB-UniRule"/>
</dbReference>
<dbReference type="GO" id="GO:0140096">
    <property type="term" value="F:catalytic activity, acting on a protein"/>
    <property type="evidence" value="ECO:0007669"/>
    <property type="project" value="UniProtKB-ARBA"/>
</dbReference>
<dbReference type="GO" id="GO:0004821">
    <property type="term" value="F:histidine-tRNA ligase activity"/>
    <property type="evidence" value="ECO:0007669"/>
    <property type="project" value="UniProtKB-UniRule"/>
</dbReference>
<dbReference type="GO" id="GO:0016740">
    <property type="term" value="F:transferase activity"/>
    <property type="evidence" value="ECO:0007669"/>
    <property type="project" value="UniProtKB-ARBA"/>
</dbReference>
<dbReference type="GO" id="GO:0006427">
    <property type="term" value="P:histidyl-tRNA aminoacylation"/>
    <property type="evidence" value="ECO:0007669"/>
    <property type="project" value="UniProtKB-UniRule"/>
</dbReference>
<dbReference type="CDD" id="cd00773">
    <property type="entry name" value="HisRS-like_core"/>
    <property type="match status" value="1"/>
</dbReference>
<dbReference type="CDD" id="cd00859">
    <property type="entry name" value="HisRS_anticodon"/>
    <property type="match status" value="1"/>
</dbReference>
<dbReference type="FunFam" id="3.30.930.10:FF:000005">
    <property type="entry name" value="Histidine--tRNA ligase"/>
    <property type="match status" value="1"/>
</dbReference>
<dbReference type="Gene3D" id="3.40.50.800">
    <property type="entry name" value="Anticodon-binding domain"/>
    <property type="match status" value="1"/>
</dbReference>
<dbReference type="Gene3D" id="3.30.930.10">
    <property type="entry name" value="Bira Bifunctional Protein, Domain 2"/>
    <property type="match status" value="1"/>
</dbReference>
<dbReference type="HAMAP" id="MF_00127">
    <property type="entry name" value="His_tRNA_synth"/>
    <property type="match status" value="1"/>
</dbReference>
<dbReference type="InterPro" id="IPR006195">
    <property type="entry name" value="aa-tRNA-synth_II"/>
</dbReference>
<dbReference type="InterPro" id="IPR045864">
    <property type="entry name" value="aa-tRNA-synth_II/BPL/LPL"/>
</dbReference>
<dbReference type="InterPro" id="IPR004154">
    <property type="entry name" value="Anticodon-bd"/>
</dbReference>
<dbReference type="InterPro" id="IPR036621">
    <property type="entry name" value="Anticodon-bd_dom_sf"/>
</dbReference>
<dbReference type="InterPro" id="IPR015807">
    <property type="entry name" value="His-tRNA-ligase"/>
</dbReference>
<dbReference type="InterPro" id="IPR041715">
    <property type="entry name" value="HisRS-like_core"/>
</dbReference>
<dbReference type="InterPro" id="IPR004516">
    <property type="entry name" value="HisRS/HisZ"/>
</dbReference>
<dbReference type="InterPro" id="IPR033656">
    <property type="entry name" value="HisRS_anticodon"/>
</dbReference>
<dbReference type="NCBIfam" id="TIGR00442">
    <property type="entry name" value="hisS"/>
    <property type="match status" value="1"/>
</dbReference>
<dbReference type="PANTHER" id="PTHR43707:SF1">
    <property type="entry name" value="HISTIDINE--TRNA LIGASE, MITOCHONDRIAL-RELATED"/>
    <property type="match status" value="1"/>
</dbReference>
<dbReference type="PANTHER" id="PTHR43707">
    <property type="entry name" value="HISTIDYL-TRNA SYNTHETASE"/>
    <property type="match status" value="1"/>
</dbReference>
<dbReference type="Pfam" id="PF03129">
    <property type="entry name" value="HGTP_anticodon"/>
    <property type="match status" value="1"/>
</dbReference>
<dbReference type="Pfam" id="PF13393">
    <property type="entry name" value="tRNA-synt_His"/>
    <property type="match status" value="1"/>
</dbReference>
<dbReference type="PIRSF" id="PIRSF001549">
    <property type="entry name" value="His-tRNA_synth"/>
    <property type="match status" value="1"/>
</dbReference>
<dbReference type="SUPFAM" id="SSF52954">
    <property type="entry name" value="Class II aaRS ABD-related"/>
    <property type="match status" value="1"/>
</dbReference>
<dbReference type="SUPFAM" id="SSF55681">
    <property type="entry name" value="Class II aaRS and biotin synthetases"/>
    <property type="match status" value="1"/>
</dbReference>
<dbReference type="PROSITE" id="PS50862">
    <property type="entry name" value="AA_TRNA_LIGASE_II"/>
    <property type="match status" value="1"/>
</dbReference>